<gene>
    <name evidence="1" type="primary">kdkA</name>
    <name type="ordered locus">MS1964</name>
</gene>
<sequence>MLQVQHENHFFLFNFDENRPNQEHFFESYFWQKQNRIIGSAKGRGTTWFIQSQDLFGVNTALRHYYRGGLWGKINKDRYAFSSLEETRSFAEFNLLNRLYQAGLPVPKPIGAHVEKLAFNHYRADLLSERIENTQDLTALLPNTELTAEQWQQIGKLIRRLHDLQICHTDLNAHNILIRQQNNDTKFWLIDFDKCGEKPGNLWKQENLQRLHRSFLKEVKRMRIQFSEKNWADLLNGYQN</sequence>
<protein>
    <recommendedName>
        <fullName evidence="1">3-deoxy-D-manno-octulosonic acid kinase</fullName>
        <shortName evidence="1">Kdo kinase</shortName>
        <ecNumber evidence="1">2.7.1.166</ecNumber>
    </recommendedName>
    <alternativeName>
        <fullName>SPS1 protein</fullName>
    </alternativeName>
</protein>
<feature type="chain" id="PRO_0000263413" description="3-deoxy-D-manno-octulosonic acid kinase">
    <location>
        <begin position="1"/>
        <end position="240"/>
    </location>
</feature>
<feature type="active site" evidence="1">
    <location>
        <position position="170"/>
    </location>
</feature>
<name>KDKA_MANSM</name>
<organism>
    <name type="scientific">Mannheimia succiniciproducens (strain KCTC 0769BP / MBEL55E)</name>
    <dbReference type="NCBI Taxonomy" id="221988"/>
    <lineage>
        <taxon>Bacteria</taxon>
        <taxon>Pseudomonadati</taxon>
        <taxon>Pseudomonadota</taxon>
        <taxon>Gammaproteobacteria</taxon>
        <taxon>Pasteurellales</taxon>
        <taxon>Pasteurellaceae</taxon>
        <taxon>Basfia</taxon>
    </lineage>
</organism>
<keyword id="KW-0067">ATP-binding</keyword>
<keyword id="KW-0997">Cell inner membrane</keyword>
<keyword id="KW-1003">Cell membrane</keyword>
<keyword id="KW-0418">Kinase</keyword>
<keyword id="KW-0448">Lipopolysaccharide biosynthesis</keyword>
<keyword id="KW-0472">Membrane</keyword>
<keyword id="KW-0547">Nucleotide-binding</keyword>
<keyword id="KW-0808">Transferase</keyword>
<accession>Q65R39</accession>
<comment type="function">
    <text evidence="1">Catalyzes the ATP-dependent phosphorylation of the 3-deoxy-D-manno-octulosonic acid (Kdo) residue in Kdo-lipid IV(A) at the 4-OH position.</text>
</comment>
<comment type="catalytic activity">
    <reaction evidence="1">
        <text>an alpha-Kdo-(2-&gt;6)-lipid IVA + ATP = a 4-O-phospho-alpha-Kdo-(2-&gt;6)-lipid IVA + ADP + H(+)</text>
        <dbReference type="Rhea" id="RHEA:74271"/>
        <dbReference type="ChEBI" id="CHEBI:15378"/>
        <dbReference type="ChEBI" id="CHEBI:30616"/>
        <dbReference type="ChEBI" id="CHEBI:176428"/>
        <dbReference type="ChEBI" id="CHEBI:193140"/>
        <dbReference type="ChEBI" id="CHEBI:456216"/>
        <dbReference type="EC" id="2.7.1.166"/>
    </reaction>
</comment>
<comment type="pathway">
    <text evidence="1">Bacterial outer membrane biogenesis; LPS core biosynthesis.</text>
</comment>
<comment type="subcellular location">
    <subcellularLocation>
        <location evidence="1">Cell inner membrane</location>
        <topology evidence="1">Peripheral membrane protein</topology>
        <orientation evidence="1">Cytoplasmic side</orientation>
    </subcellularLocation>
</comment>
<comment type="similarity">
    <text evidence="1">Belongs to the protein kinase superfamily. KdkA/RfaP family.</text>
</comment>
<comment type="sequence caution" evidence="2">
    <conflict type="erroneous initiation">
        <sequence resource="EMBL-CDS" id="AAU38571"/>
    </conflict>
</comment>
<proteinExistence type="inferred from homology"/>
<evidence type="ECO:0000255" key="1">
    <source>
        <dbReference type="HAMAP-Rule" id="MF_00521"/>
    </source>
</evidence>
<evidence type="ECO:0000305" key="2"/>
<dbReference type="EC" id="2.7.1.166" evidence="1"/>
<dbReference type="EMBL" id="AE016827">
    <property type="protein sequence ID" value="AAU38571.1"/>
    <property type="status" value="ALT_INIT"/>
    <property type="molecule type" value="Genomic_DNA"/>
</dbReference>
<dbReference type="RefSeq" id="WP_041640030.1">
    <property type="nucleotide sequence ID" value="NC_006300.1"/>
</dbReference>
<dbReference type="SMR" id="Q65R39"/>
<dbReference type="STRING" id="221988.MS1964"/>
<dbReference type="KEGG" id="msu:MS1964"/>
<dbReference type="eggNOG" id="COG3642">
    <property type="taxonomic scope" value="Bacteria"/>
</dbReference>
<dbReference type="HOGENOM" id="CLU_094226_0_0_6"/>
<dbReference type="OrthoDB" id="6854449at2"/>
<dbReference type="UniPathway" id="UPA00958"/>
<dbReference type="Proteomes" id="UP000000607">
    <property type="component" value="Chromosome"/>
</dbReference>
<dbReference type="GO" id="GO:0005886">
    <property type="term" value="C:plasma membrane"/>
    <property type="evidence" value="ECO:0007669"/>
    <property type="project" value="UniProtKB-SubCell"/>
</dbReference>
<dbReference type="GO" id="GO:0005524">
    <property type="term" value="F:ATP binding"/>
    <property type="evidence" value="ECO:0007669"/>
    <property type="project" value="UniProtKB-UniRule"/>
</dbReference>
<dbReference type="GO" id="GO:0016301">
    <property type="term" value="F:kinase activity"/>
    <property type="evidence" value="ECO:0007669"/>
    <property type="project" value="UniProtKB-KW"/>
</dbReference>
<dbReference type="GO" id="GO:0016773">
    <property type="term" value="F:phosphotransferase activity, alcohol group as acceptor"/>
    <property type="evidence" value="ECO:0007669"/>
    <property type="project" value="UniProtKB-UniRule"/>
</dbReference>
<dbReference type="GO" id="GO:0009244">
    <property type="term" value="P:lipopolysaccharide core region biosynthetic process"/>
    <property type="evidence" value="ECO:0007669"/>
    <property type="project" value="UniProtKB-UniRule"/>
</dbReference>
<dbReference type="Gene3D" id="1.10.510.10">
    <property type="entry name" value="Transferase(Phosphotransferase) domain 1"/>
    <property type="match status" value="1"/>
</dbReference>
<dbReference type="HAMAP" id="MF_00521">
    <property type="entry name" value="KDO_kinase"/>
    <property type="match status" value="1"/>
</dbReference>
<dbReference type="InterPro" id="IPR022826">
    <property type="entry name" value="KDO_kinase"/>
</dbReference>
<dbReference type="InterPro" id="IPR011009">
    <property type="entry name" value="Kinase-like_dom_sf"/>
</dbReference>
<dbReference type="NCBIfam" id="NF002475">
    <property type="entry name" value="PRK01723.1"/>
    <property type="match status" value="1"/>
</dbReference>
<dbReference type="Pfam" id="PF06293">
    <property type="entry name" value="Kdo"/>
    <property type="match status" value="1"/>
</dbReference>
<dbReference type="SUPFAM" id="SSF56112">
    <property type="entry name" value="Protein kinase-like (PK-like)"/>
    <property type="match status" value="1"/>
</dbReference>
<reference key="1">
    <citation type="journal article" date="2004" name="Nat. Biotechnol.">
        <title>The genome sequence of the capnophilic rumen bacterium Mannheimia succiniciproducens.</title>
        <authorList>
            <person name="Hong S.H."/>
            <person name="Kim J.S."/>
            <person name="Lee S.Y."/>
            <person name="In Y.H."/>
            <person name="Choi S.S."/>
            <person name="Rih J.-K."/>
            <person name="Kim C.H."/>
            <person name="Jeong H."/>
            <person name="Hur C.G."/>
            <person name="Kim J.J."/>
        </authorList>
    </citation>
    <scope>NUCLEOTIDE SEQUENCE [LARGE SCALE GENOMIC DNA]</scope>
    <source>
        <strain>KCTC 0769BP / MBEL55E</strain>
    </source>
</reference>